<accession>Q834T4</accession>
<gene>
    <name evidence="1" type="primary">der</name>
    <name type="synonym">engA</name>
    <name type="ordered locus">EF_1549</name>
</gene>
<keyword id="KW-0342">GTP-binding</keyword>
<keyword id="KW-0547">Nucleotide-binding</keyword>
<keyword id="KW-1185">Reference proteome</keyword>
<keyword id="KW-0677">Repeat</keyword>
<keyword id="KW-0690">Ribosome biogenesis</keyword>
<evidence type="ECO:0000255" key="1">
    <source>
        <dbReference type="HAMAP-Rule" id="MF_00195"/>
    </source>
</evidence>
<name>DER_ENTFA</name>
<dbReference type="EMBL" id="AE016830">
    <property type="protein sequence ID" value="AAO81336.1"/>
    <property type="molecule type" value="Genomic_DNA"/>
</dbReference>
<dbReference type="RefSeq" id="NP_815266.1">
    <property type="nucleotide sequence ID" value="NC_004668.1"/>
</dbReference>
<dbReference type="RefSeq" id="WP_002379441.1">
    <property type="nucleotide sequence ID" value="NZ_KE136528.1"/>
</dbReference>
<dbReference type="SMR" id="Q834T4"/>
<dbReference type="STRING" id="226185.EF_1549"/>
<dbReference type="EnsemblBacteria" id="AAO81336">
    <property type="protein sequence ID" value="AAO81336"/>
    <property type="gene ID" value="EF_1549"/>
</dbReference>
<dbReference type="KEGG" id="efa:EF1549"/>
<dbReference type="PATRIC" id="fig|226185.45.peg.1955"/>
<dbReference type="eggNOG" id="COG1160">
    <property type="taxonomic scope" value="Bacteria"/>
</dbReference>
<dbReference type="HOGENOM" id="CLU_016077_6_2_9"/>
<dbReference type="Proteomes" id="UP000001415">
    <property type="component" value="Chromosome"/>
</dbReference>
<dbReference type="GO" id="GO:0005525">
    <property type="term" value="F:GTP binding"/>
    <property type="evidence" value="ECO:0007669"/>
    <property type="project" value="UniProtKB-UniRule"/>
</dbReference>
<dbReference type="GO" id="GO:0043022">
    <property type="term" value="F:ribosome binding"/>
    <property type="evidence" value="ECO:0007669"/>
    <property type="project" value="TreeGrafter"/>
</dbReference>
<dbReference type="GO" id="GO:0042254">
    <property type="term" value="P:ribosome biogenesis"/>
    <property type="evidence" value="ECO:0007669"/>
    <property type="project" value="UniProtKB-KW"/>
</dbReference>
<dbReference type="CDD" id="cd01894">
    <property type="entry name" value="EngA1"/>
    <property type="match status" value="1"/>
</dbReference>
<dbReference type="CDD" id="cd01895">
    <property type="entry name" value="EngA2"/>
    <property type="match status" value="1"/>
</dbReference>
<dbReference type="FunFam" id="3.30.300.20:FF:000004">
    <property type="entry name" value="GTPase Der"/>
    <property type="match status" value="1"/>
</dbReference>
<dbReference type="FunFam" id="3.40.50.300:FF:000040">
    <property type="entry name" value="GTPase Der"/>
    <property type="match status" value="1"/>
</dbReference>
<dbReference type="FunFam" id="3.40.50.300:FF:000057">
    <property type="entry name" value="GTPase Der"/>
    <property type="match status" value="1"/>
</dbReference>
<dbReference type="Gene3D" id="3.30.300.20">
    <property type="match status" value="1"/>
</dbReference>
<dbReference type="Gene3D" id="3.40.50.300">
    <property type="entry name" value="P-loop containing nucleotide triphosphate hydrolases"/>
    <property type="match status" value="2"/>
</dbReference>
<dbReference type="HAMAP" id="MF_00195">
    <property type="entry name" value="GTPase_Der"/>
    <property type="match status" value="1"/>
</dbReference>
<dbReference type="InterPro" id="IPR031166">
    <property type="entry name" value="G_ENGA"/>
</dbReference>
<dbReference type="InterPro" id="IPR006073">
    <property type="entry name" value="GTP-bd"/>
</dbReference>
<dbReference type="InterPro" id="IPR016484">
    <property type="entry name" value="GTPase_Der"/>
</dbReference>
<dbReference type="InterPro" id="IPR032859">
    <property type="entry name" value="KH_dom-like"/>
</dbReference>
<dbReference type="InterPro" id="IPR015946">
    <property type="entry name" value="KH_dom-like_a/b"/>
</dbReference>
<dbReference type="InterPro" id="IPR027417">
    <property type="entry name" value="P-loop_NTPase"/>
</dbReference>
<dbReference type="InterPro" id="IPR005225">
    <property type="entry name" value="Small_GTP-bd"/>
</dbReference>
<dbReference type="NCBIfam" id="TIGR03594">
    <property type="entry name" value="GTPase_EngA"/>
    <property type="match status" value="1"/>
</dbReference>
<dbReference type="NCBIfam" id="TIGR00231">
    <property type="entry name" value="small_GTP"/>
    <property type="match status" value="2"/>
</dbReference>
<dbReference type="PANTHER" id="PTHR43834">
    <property type="entry name" value="GTPASE DER"/>
    <property type="match status" value="1"/>
</dbReference>
<dbReference type="PANTHER" id="PTHR43834:SF6">
    <property type="entry name" value="GTPASE DER"/>
    <property type="match status" value="1"/>
</dbReference>
<dbReference type="Pfam" id="PF14714">
    <property type="entry name" value="KH_dom-like"/>
    <property type="match status" value="1"/>
</dbReference>
<dbReference type="Pfam" id="PF01926">
    <property type="entry name" value="MMR_HSR1"/>
    <property type="match status" value="2"/>
</dbReference>
<dbReference type="PIRSF" id="PIRSF006485">
    <property type="entry name" value="GTP-binding_EngA"/>
    <property type="match status" value="1"/>
</dbReference>
<dbReference type="PRINTS" id="PR00326">
    <property type="entry name" value="GTP1OBG"/>
</dbReference>
<dbReference type="SUPFAM" id="SSF52540">
    <property type="entry name" value="P-loop containing nucleoside triphosphate hydrolases"/>
    <property type="match status" value="2"/>
</dbReference>
<dbReference type="PROSITE" id="PS51712">
    <property type="entry name" value="G_ENGA"/>
    <property type="match status" value="2"/>
</dbReference>
<proteinExistence type="inferred from homology"/>
<feature type="chain" id="PRO_0000178994" description="GTPase Der">
    <location>
        <begin position="1"/>
        <end position="436"/>
    </location>
</feature>
<feature type="domain" description="EngA-type G 1">
    <location>
        <begin position="4"/>
        <end position="167"/>
    </location>
</feature>
<feature type="domain" description="EngA-type G 2">
    <location>
        <begin position="175"/>
        <end position="351"/>
    </location>
</feature>
<feature type="domain" description="KH-like" evidence="1">
    <location>
        <begin position="352"/>
        <end position="436"/>
    </location>
</feature>
<feature type="binding site" evidence="1">
    <location>
        <begin position="10"/>
        <end position="17"/>
    </location>
    <ligand>
        <name>GTP</name>
        <dbReference type="ChEBI" id="CHEBI:37565"/>
        <label>1</label>
    </ligand>
</feature>
<feature type="binding site" evidence="1">
    <location>
        <begin position="57"/>
        <end position="61"/>
    </location>
    <ligand>
        <name>GTP</name>
        <dbReference type="ChEBI" id="CHEBI:37565"/>
        <label>1</label>
    </ligand>
</feature>
<feature type="binding site" evidence="1">
    <location>
        <begin position="119"/>
        <end position="122"/>
    </location>
    <ligand>
        <name>GTP</name>
        <dbReference type="ChEBI" id="CHEBI:37565"/>
        <label>1</label>
    </ligand>
</feature>
<feature type="binding site" evidence="1">
    <location>
        <begin position="181"/>
        <end position="188"/>
    </location>
    <ligand>
        <name>GTP</name>
        <dbReference type="ChEBI" id="CHEBI:37565"/>
        <label>2</label>
    </ligand>
</feature>
<feature type="binding site" evidence="1">
    <location>
        <begin position="229"/>
        <end position="233"/>
    </location>
    <ligand>
        <name>GTP</name>
        <dbReference type="ChEBI" id="CHEBI:37565"/>
        <label>2</label>
    </ligand>
</feature>
<feature type="binding site" evidence="1">
    <location>
        <begin position="294"/>
        <end position="297"/>
    </location>
    <ligand>
        <name>GTP</name>
        <dbReference type="ChEBI" id="CHEBI:37565"/>
        <label>2</label>
    </ligand>
</feature>
<comment type="function">
    <text evidence="1">GTPase that plays an essential role in the late steps of ribosome biogenesis.</text>
</comment>
<comment type="subunit">
    <text evidence="1">Associates with the 50S ribosomal subunit.</text>
</comment>
<comment type="similarity">
    <text evidence="1">Belongs to the TRAFAC class TrmE-Era-EngA-EngB-Septin-like GTPase superfamily. EngA (Der) GTPase family.</text>
</comment>
<sequence length="436" mass="48986">MANPTIAIVGRPNVGKSTIFNRIAGVRISIVEDTPGVTRDRIYTTGEWLGREFSIIDTGGIDLGDEPFMDQIKHQAEIAIDEADVIIFVASGREGITDADELVAKILYRSNKPVILAVNKVDNPEMRNDIYEFYALGLGDPFPVSGSHGLGIGDVLDEAVKHFPNTSEEEDEDTIKFSLIGRPNVGKSSLINAILGEDRVIVSDIEGTTRDAIDTYFESEEGQKFLMIDTAGMRKRGKVYESTEKYSVMRAMRAIERSDIVLMVLNAEEGIREQDKRVAGYAHEAGRGIIIVVNKWDTVKKDTNTMRDFEAEIRDEFQYLDYAPIIFVSALTKQRLNKLPELIETVSMNQNLRIPSALLNDVVMDAVAINPTPTDKGKRLKIFYATQVAVKPPTFVIFVNEEELMHFSYARFLENQIRKAFTFEGTPIKIIPRRRK</sequence>
<organism>
    <name type="scientific">Enterococcus faecalis (strain ATCC 700802 / V583)</name>
    <dbReference type="NCBI Taxonomy" id="226185"/>
    <lineage>
        <taxon>Bacteria</taxon>
        <taxon>Bacillati</taxon>
        <taxon>Bacillota</taxon>
        <taxon>Bacilli</taxon>
        <taxon>Lactobacillales</taxon>
        <taxon>Enterococcaceae</taxon>
        <taxon>Enterococcus</taxon>
    </lineage>
</organism>
<reference key="1">
    <citation type="journal article" date="2003" name="Science">
        <title>Role of mobile DNA in the evolution of vancomycin-resistant Enterococcus faecalis.</title>
        <authorList>
            <person name="Paulsen I.T."/>
            <person name="Banerjei L."/>
            <person name="Myers G.S.A."/>
            <person name="Nelson K.E."/>
            <person name="Seshadri R."/>
            <person name="Read T.D."/>
            <person name="Fouts D.E."/>
            <person name="Eisen J.A."/>
            <person name="Gill S.R."/>
            <person name="Heidelberg J.F."/>
            <person name="Tettelin H."/>
            <person name="Dodson R.J."/>
            <person name="Umayam L.A."/>
            <person name="Brinkac L.M."/>
            <person name="Beanan M.J."/>
            <person name="Daugherty S.C."/>
            <person name="DeBoy R.T."/>
            <person name="Durkin S.A."/>
            <person name="Kolonay J.F."/>
            <person name="Madupu R."/>
            <person name="Nelson W.C."/>
            <person name="Vamathevan J.J."/>
            <person name="Tran B."/>
            <person name="Upton J."/>
            <person name="Hansen T."/>
            <person name="Shetty J."/>
            <person name="Khouri H.M."/>
            <person name="Utterback T.R."/>
            <person name="Radune D."/>
            <person name="Ketchum K.A."/>
            <person name="Dougherty B.A."/>
            <person name="Fraser C.M."/>
        </authorList>
    </citation>
    <scope>NUCLEOTIDE SEQUENCE [LARGE SCALE GENOMIC DNA]</scope>
    <source>
        <strain>ATCC 700802 / V583</strain>
    </source>
</reference>
<protein>
    <recommendedName>
        <fullName evidence="1">GTPase Der</fullName>
    </recommendedName>
    <alternativeName>
        <fullName evidence="1">GTP-binding protein EngA</fullName>
    </alternativeName>
</protein>